<organism>
    <name type="scientific">Staphylococcus aureus</name>
    <dbReference type="NCBI Taxonomy" id="1280"/>
    <lineage>
        <taxon>Bacteria</taxon>
        <taxon>Bacillati</taxon>
        <taxon>Bacillota</taxon>
        <taxon>Bacilli</taxon>
        <taxon>Bacillales</taxon>
        <taxon>Staphylococcaceae</taxon>
        <taxon>Staphylococcus</taxon>
    </lineage>
</organism>
<reference key="1">
    <citation type="journal article" date="1987" name="J. Bacteriol.">
        <title>Replication control genes of plasmid pE194.</title>
        <authorList>
            <person name="Villafane R."/>
            <person name="Bechhofer D.H."/>
            <person name="Narayanan C.S."/>
            <person name="Dubnau D."/>
        </authorList>
    </citation>
    <scope>NUCLEOTIDE SEQUENCE [GENOMIC DNA]</scope>
</reference>
<reference key="2">
    <citation type="journal article" date="1982" name="J. Bacteriol.">
        <title>Nucleotide sequence and functional map of pE194, a plasmid that specifies inducible resistance to macrolide, lincosamide, and streptogramin type B antibodies.</title>
        <authorList>
            <person name="Horinouchi S."/>
            <person name="Weisblum B."/>
        </authorList>
    </citation>
    <scope>NUCLEOTIDE SEQUENCE [GENOMIC DNA]</scope>
</reference>
<keyword id="KW-0235">DNA replication</keyword>
<keyword id="KW-0614">Plasmid</keyword>
<geneLocation type="plasmid">
    <name>pE194</name>
</geneLocation>
<sequence>MSENVIKETENKKNSRGRNWTFVLYPESAKAEWLEYLKELHIQFVVSPLHDRDTDTEGRMKKEHYHILVMYEGNKSYEQIKIITEELNATIPQIAGSVKGLVRYMLHMDDPNKFKYQKEDMIVYGGVDVDELLKKTTTDRYKLIKEMIEFIDEQGIVEFKSLMDYAMKFKFDDWFPLLCDNSAYVIQEYIKSNRYKSDR</sequence>
<comment type="function">
    <text>Is essential for plasmid replication. Nicks the positive strand at the plus origin of replication.</text>
</comment>
<comment type="similarity">
    <text evidence="1">Belongs to the Gram-positive plasmids replication protein type 2 family.</text>
</comment>
<comment type="sequence caution" evidence="1">
    <conflict type="frameshift">
        <sequence resource="EMBL-CDS" id="CAA24589"/>
    </conflict>
</comment>
<protein>
    <recommendedName>
        <fullName>Replication protein</fullName>
    </recommendedName>
</protein>
<feature type="chain" id="PRO_0000068330" description="Replication protein">
    <location>
        <begin position="1"/>
        <end position="199"/>
    </location>
</feature>
<dbReference type="EMBL" id="M17811">
    <property type="protein sequence ID" value="AAA25603.1"/>
    <property type="molecule type" value="Genomic_DNA"/>
</dbReference>
<dbReference type="EMBL" id="V01278">
    <property type="protein sequence ID" value="CAA24589.1"/>
    <property type="status" value="ALT_FRAME"/>
    <property type="molecule type" value="Genomic_DNA"/>
</dbReference>
<dbReference type="PIR" id="A04487">
    <property type="entry name" value="QQSABE"/>
</dbReference>
<dbReference type="RefSeq" id="WP_012816703.1">
    <property type="nucleotide sequence ID" value="NZ_VRQI01000067.1"/>
</dbReference>
<dbReference type="RefSeq" id="YP_006938614.1">
    <property type="nucleotide sequence ID" value="NC_013345.1"/>
</dbReference>
<dbReference type="RefSeq" id="YP_009060504.1">
    <property type="nucleotide sequence ID" value="NC_024964.1"/>
</dbReference>
<dbReference type="RefSeq" id="YP_025319.1">
    <property type="nucleotide sequence ID" value="NC_005908.1"/>
</dbReference>
<dbReference type="SMR" id="P03858"/>
<dbReference type="GO" id="GO:0005727">
    <property type="term" value="C:extrachromosomal circular DNA"/>
    <property type="evidence" value="ECO:0007669"/>
    <property type="project" value="InterPro"/>
</dbReference>
<dbReference type="GO" id="GO:0003677">
    <property type="term" value="F:DNA binding"/>
    <property type="evidence" value="ECO:0007669"/>
    <property type="project" value="InterPro"/>
</dbReference>
<dbReference type="GO" id="GO:0003916">
    <property type="term" value="F:DNA topoisomerase activity"/>
    <property type="evidence" value="ECO:0007669"/>
    <property type="project" value="InterPro"/>
</dbReference>
<dbReference type="GO" id="GO:0006260">
    <property type="term" value="P:DNA replication"/>
    <property type="evidence" value="ECO:0007669"/>
    <property type="project" value="UniProtKB-KW"/>
</dbReference>
<dbReference type="Gene3D" id="3.40.1310.30">
    <property type="match status" value="1"/>
</dbReference>
<dbReference type="InterPro" id="IPR002631">
    <property type="entry name" value="Plasmid_rep_OBD"/>
</dbReference>
<dbReference type="InterPro" id="IPR053923">
    <property type="entry name" value="RepB_C"/>
</dbReference>
<dbReference type="Pfam" id="PF01719">
    <property type="entry name" value="Rep_OBD"/>
    <property type="match status" value="1"/>
</dbReference>
<dbReference type="Pfam" id="PF21861">
    <property type="entry name" value="RepB_C"/>
    <property type="match status" value="1"/>
</dbReference>
<gene>
    <name type="primary">repF</name>
    <name type="synonym">repC</name>
</gene>
<name>REPY_STAAU</name>
<evidence type="ECO:0000305" key="1"/>
<proteinExistence type="inferred from homology"/>
<accession>P03858</accession>